<dbReference type="EC" id="1.1.1.290" evidence="1"/>
<dbReference type="EMBL" id="CP000644">
    <property type="protein sequence ID" value="ABO90563.1"/>
    <property type="molecule type" value="Genomic_DNA"/>
</dbReference>
<dbReference type="RefSeq" id="WP_005310562.1">
    <property type="nucleotide sequence ID" value="NC_009348.1"/>
</dbReference>
<dbReference type="SMR" id="A4SNU1"/>
<dbReference type="STRING" id="29491.GCA_000820065_00738"/>
<dbReference type="KEGG" id="asa:ASA_2534"/>
<dbReference type="PATRIC" id="fig|382245.13.peg.2499"/>
<dbReference type="eggNOG" id="COG0111">
    <property type="taxonomic scope" value="Bacteria"/>
</dbReference>
<dbReference type="HOGENOM" id="CLU_019796_4_0_6"/>
<dbReference type="UniPathway" id="UPA00244">
    <property type="reaction ID" value="UER00310"/>
</dbReference>
<dbReference type="Proteomes" id="UP000000225">
    <property type="component" value="Chromosome"/>
</dbReference>
<dbReference type="GO" id="GO:0005829">
    <property type="term" value="C:cytosol"/>
    <property type="evidence" value="ECO:0007669"/>
    <property type="project" value="TreeGrafter"/>
</dbReference>
<dbReference type="GO" id="GO:0033711">
    <property type="term" value="F:4-phosphoerythronate dehydrogenase activity"/>
    <property type="evidence" value="ECO:0007669"/>
    <property type="project" value="UniProtKB-EC"/>
</dbReference>
<dbReference type="GO" id="GO:0051287">
    <property type="term" value="F:NAD binding"/>
    <property type="evidence" value="ECO:0007669"/>
    <property type="project" value="InterPro"/>
</dbReference>
<dbReference type="GO" id="GO:0046983">
    <property type="term" value="F:protein dimerization activity"/>
    <property type="evidence" value="ECO:0007669"/>
    <property type="project" value="InterPro"/>
</dbReference>
<dbReference type="GO" id="GO:0036001">
    <property type="term" value="P:'de novo' pyridoxal 5'-phosphate biosynthetic process"/>
    <property type="evidence" value="ECO:0007669"/>
    <property type="project" value="TreeGrafter"/>
</dbReference>
<dbReference type="GO" id="GO:0008615">
    <property type="term" value="P:pyridoxine biosynthetic process"/>
    <property type="evidence" value="ECO:0007669"/>
    <property type="project" value="UniProtKB-UniRule"/>
</dbReference>
<dbReference type="CDD" id="cd12158">
    <property type="entry name" value="ErythrP_dh"/>
    <property type="match status" value="1"/>
</dbReference>
<dbReference type="Gene3D" id="3.30.1370.170">
    <property type="match status" value="1"/>
</dbReference>
<dbReference type="Gene3D" id="3.40.50.720">
    <property type="entry name" value="NAD(P)-binding Rossmann-like Domain"/>
    <property type="match status" value="2"/>
</dbReference>
<dbReference type="HAMAP" id="MF_01825">
    <property type="entry name" value="PdxB"/>
    <property type="match status" value="1"/>
</dbReference>
<dbReference type="InterPro" id="IPR006139">
    <property type="entry name" value="D-isomer_2_OHA_DH_cat_dom"/>
</dbReference>
<dbReference type="InterPro" id="IPR006140">
    <property type="entry name" value="D-isomer_DH_NAD-bd"/>
</dbReference>
<dbReference type="InterPro" id="IPR020921">
    <property type="entry name" value="Erythronate-4-P_DHase"/>
</dbReference>
<dbReference type="InterPro" id="IPR024531">
    <property type="entry name" value="Erythronate-4-P_DHase_dimer"/>
</dbReference>
<dbReference type="InterPro" id="IPR036291">
    <property type="entry name" value="NAD(P)-bd_dom_sf"/>
</dbReference>
<dbReference type="InterPro" id="IPR038251">
    <property type="entry name" value="PdxB_dimer_sf"/>
</dbReference>
<dbReference type="PANTHER" id="PTHR42938">
    <property type="entry name" value="FORMATE DEHYDROGENASE 1"/>
    <property type="match status" value="1"/>
</dbReference>
<dbReference type="PANTHER" id="PTHR42938:SF9">
    <property type="entry name" value="FORMATE DEHYDROGENASE 1"/>
    <property type="match status" value="1"/>
</dbReference>
<dbReference type="Pfam" id="PF00389">
    <property type="entry name" value="2-Hacid_dh"/>
    <property type="match status" value="1"/>
</dbReference>
<dbReference type="Pfam" id="PF02826">
    <property type="entry name" value="2-Hacid_dh_C"/>
    <property type="match status" value="1"/>
</dbReference>
<dbReference type="Pfam" id="PF11890">
    <property type="entry name" value="DUF3410"/>
    <property type="match status" value="1"/>
</dbReference>
<dbReference type="SUPFAM" id="SSF52283">
    <property type="entry name" value="Formate/glycerate dehydrogenase catalytic domain-like"/>
    <property type="match status" value="1"/>
</dbReference>
<dbReference type="SUPFAM" id="SSF51735">
    <property type="entry name" value="NAD(P)-binding Rossmann-fold domains"/>
    <property type="match status" value="1"/>
</dbReference>
<organism>
    <name type="scientific">Aeromonas salmonicida (strain A449)</name>
    <dbReference type="NCBI Taxonomy" id="382245"/>
    <lineage>
        <taxon>Bacteria</taxon>
        <taxon>Pseudomonadati</taxon>
        <taxon>Pseudomonadota</taxon>
        <taxon>Gammaproteobacteria</taxon>
        <taxon>Aeromonadales</taxon>
        <taxon>Aeromonadaceae</taxon>
        <taxon>Aeromonas</taxon>
    </lineage>
</organism>
<sequence length="377" mass="41462">MKIVVDENMPHALELFAEFGEVIPLPGRQMQAVDLQDADVLLVRSVTRVDAELLATSPRLRFVGTATIGTDHVDKALLAVRNIPFFSAPGCNKYSVGDYVLSTLLVLAERHELNLREMSLAVIGAGNTGECVACKAEALGMRVLRCDPPRARVAGQAGETDAFVDYQTALGADIVSFHVPITREGPDATFHLLDEQVIAARPAGQILVNASRGEVWDNQALLARQQGLEPLRLVMDVWEGEPEPLRALVPHTEIATPHIAGYSLEGKARGTWMLYQALCQQLGRAARQDLQSLLPAPEVRALTPGQPVDQALIKQLVHLIYDVRRDDARFRNRIELPGSFDEQRKHYPERRELSSLHVNGPFASDTLARLGFTVQPG</sequence>
<name>PDXB_AERS4</name>
<reference key="1">
    <citation type="journal article" date="2008" name="BMC Genomics">
        <title>The genome of Aeromonas salmonicida subsp. salmonicida A449: insights into the evolution of a fish pathogen.</title>
        <authorList>
            <person name="Reith M.E."/>
            <person name="Singh R.K."/>
            <person name="Curtis B."/>
            <person name="Boyd J.M."/>
            <person name="Bouevitch A."/>
            <person name="Kimball J."/>
            <person name="Munholland J."/>
            <person name="Murphy C."/>
            <person name="Sarty D."/>
            <person name="Williams J."/>
            <person name="Nash J.H."/>
            <person name="Johnson S.C."/>
            <person name="Brown L.L."/>
        </authorList>
    </citation>
    <scope>NUCLEOTIDE SEQUENCE [LARGE SCALE GENOMIC DNA]</scope>
    <source>
        <strain>A449</strain>
    </source>
</reference>
<feature type="chain" id="PRO_0000297431" description="Erythronate-4-phosphate dehydrogenase">
    <location>
        <begin position="1"/>
        <end position="377"/>
    </location>
</feature>
<feature type="active site" evidence="1">
    <location>
        <position position="212"/>
    </location>
</feature>
<feature type="active site" evidence="1">
    <location>
        <position position="241"/>
    </location>
</feature>
<feature type="active site" description="Proton donor" evidence="1">
    <location>
        <position position="258"/>
    </location>
</feature>
<feature type="binding site" evidence="1">
    <location>
        <position position="45"/>
    </location>
    <ligand>
        <name>substrate</name>
    </ligand>
</feature>
<feature type="binding site" evidence="1">
    <location>
        <position position="67"/>
    </location>
    <ligand>
        <name>substrate</name>
    </ligand>
</feature>
<feature type="binding site" evidence="1">
    <location>
        <position position="147"/>
    </location>
    <ligand>
        <name>NAD(+)</name>
        <dbReference type="ChEBI" id="CHEBI:57540"/>
    </ligand>
</feature>
<feature type="binding site" evidence="1">
    <location>
        <begin position="210"/>
        <end position="212"/>
    </location>
    <ligand>
        <name>NAD(+)</name>
        <dbReference type="ChEBI" id="CHEBI:57540"/>
    </ligand>
</feature>
<feature type="binding site" evidence="1">
    <location>
        <position position="236"/>
    </location>
    <ligand>
        <name>NAD(+)</name>
        <dbReference type="ChEBI" id="CHEBI:57540"/>
    </ligand>
</feature>
<feature type="binding site" evidence="1">
    <location>
        <position position="261"/>
    </location>
    <ligand>
        <name>NAD(+)</name>
        <dbReference type="ChEBI" id="CHEBI:57540"/>
    </ligand>
</feature>
<feature type="binding site" evidence="1">
    <location>
        <position position="262"/>
    </location>
    <ligand>
        <name>substrate</name>
    </ligand>
</feature>
<proteinExistence type="inferred from homology"/>
<comment type="function">
    <text evidence="1">Catalyzes the oxidation of erythronate-4-phosphate to 3-hydroxy-2-oxo-4-phosphonooxybutanoate.</text>
</comment>
<comment type="catalytic activity">
    <reaction evidence="1">
        <text>4-phospho-D-erythronate + NAD(+) = (R)-3-hydroxy-2-oxo-4-phosphooxybutanoate + NADH + H(+)</text>
        <dbReference type="Rhea" id="RHEA:18829"/>
        <dbReference type="ChEBI" id="CHEBI:15378"/>
        <dbReference type="ChEBI" id="CHEBI:57540"/>
        <dbReference type="ChEBI" id="CHEBI:57945"/>
        <dbReference type="ChEBI" id="CHEBI:58538"/>
        <dbReference type="ChEBI" id="CHEBI:58766"/>
        <dbReference type="EC" id="1.1.1.290"/>
    </reaction>
</comment>
<comment type="pathway">
    <text evidence="1">Cofactor biosynthesis; pyridoxine 5'-phosphate biosynthesis; pyridoxine 5'-phosphate from D-erythrose 4-phosphate: step 2/5.</text>
</comment>
<comment type="subunit">
    <text evidence="1">Homodimer.</text>
</comment>
<comment type="subcellular location">
    <subcellularLocation>
        <location evidence="1">Cytoplasm</location>
    </subcellularLocation>
</comment>
<comment type="similarity">
    <text evidence="1">Belongs to the D-isomer specific 2-hydroxyacid dehydrogenase family. PdxB subfamily.</text>
</comment>
<accession>A4SNU1</accession>
<evidence type="ECO:0000255" key="1">
    <source>
        <dbReference type="HAMAP-Rule" id="MF_01825"/>
    </source>
</evidence>
<protein>
    <recommendedName>
        <fullName evidence="1">Erythronate-4-phosphate dehydrogenase</fullName>
        <ecNumber evidence="1">1.1.1.290</ecNumber>
    </recommendedName>
</protein>
<keyword id="KW-0963">Cytoplasm</keyword>
<keyword id="KW-0520">NAD</keyword>
<keyword id="KW-0560">Oxidoreductase</keyword>
<keyword id="KW-0664">Pyridoxine biosynthesis</keyword>
<gene>
    <name evidence="1" type="primary">pdxB</name>
    <name type="ordered locus">ASA_2534</name>
</gene>